<sequence>MATEIFSDVVKSVWSHATAKHAHLRMAVQVDNRSRLLSDLVYQLEKRLSEETHLDDETLAIYESQTALLEDHMALVRKCAAQLDNSNTIDHRTPLDAECVFLFEMICPGVRYGKTLNSLWTKYVVQWPEKLIRQELDMVKPLSFKDEVAKYMEKMQEKTRKNRMTQKVINEMRIAHQKGWFFVFDTLTLADDRLQAFNENPNALRDYFRTVGRAVLRAEGRSVKDSYNDCYRYLCVPEFGGQHGRLHWHVVHMVRTLPLGSHDPNFGRKVRNYRQINSFRGMWPYGFTQPIAVRYQHDAYSRKGWLWPVDKTGKAMQSKPYQAVAWYVTKYVAKQSDQRQKAITERQKKCKNPLMAICLKKEFRVRSSRKLGMELPSMAHLSNKVLLELSRISFDSSPLYQIVKENAKKQLTLNIGALPLHVILDVRPEVRSMLKTIRRLMKKTPEFNWQSSIASMTVTLKNGDISDEARQYIIDAGITPTDLRAKATQTFGGK</sequence>
<comment type="function">
    <text>The A protein is a specific endonuclease that cleaves the viral strand of supertwisted, closed circular DNA at a unique site in the A gene. The A protein also causes relaxation of supertwisted DNA and forms a complex with viral DNA that has a discontinuity in gene A of the viral strand.</text>
</comment>
<evidence type="ECO:0000250" key="1"/>
<evidence type="ECO:0000255" key="2"/>
<accession>P25243</accession>
<keyword id="KW-0235">DNA replication</keyword>
<keyword id="KW-0238">DNA-binding</keyword>
<keyword id="KW-0255">Endonuclease</keyword>
<keyword id="KW-0378">Hydrolase</keyword>
<keyword id="KW-0479">Metal-binding</keyword>
<keyword id="KW-0540">Nuclease</keyword>
<keyword id="KW-1185">Reference proteome</keyword>
<keyword id="KW-1194">Viral DNA replication</keyword>
<keyword id="KW-0862">Zinc</keyword>
<keyword id="KW-0863">Zinc-finger</keyword>
<proteinExistence type="predicted"/>
<reference key="1">
    <citation type="journal article" date="1992" name="Biochim. Biophys. Acta">
        <title>Nucleotide sequence of the genome of the bacteriophage alpha 3: interrelationship of the genome structure and the gene products with those of the phages, phi X174, G4 and phi K.</title>
        <authorList>
            <person name="Kodaira K."/>
            <person name="Nakano K."/>
            <person name="Okada S."/>
            <person name="Taketo A."/>
        </authorList>
    </citation>
    <scope>NUCLEOTIDE SEQUENCE [GENOMIC DNA]</scope>
</reference>
<reference key="2">
    <citation type="journal article" date="1989" name="Biochim. Biophys. Acta">
        <title>Possible finger structure in gene A protein of Microviridae.</title>
        <authorList>
            <person name="Kodaira K."/>
            <person name="Miyata T."/>
            <person name="Suzuki K."/>
            <person name="Nakano K."/>
            <person name="Taketo A."/>
        </authorList>
    </citation>
    <scope>NUCLEOTIDE SEQUENCE [GENOMIC DNA] OF 228-257</scope>
</reference>
<protein>
    <recommendedName>
        <fullName>A protein</fullName>
    </recommendedName>
    <alternativeName>
        <fullName>GPA</fullName>
    </alternativeName>
</protein>
<feature type="chain" id="PRO_0000164865" description="A protein">
    <location>
        <begin position="1"/>
        <end position="494"/>
    </location>
</feature>
<feature type="zinc finger region" evidence="2">
    <location>
        <begin position="230"/>
        <end position="252"/>
    </location>
</feature>
<feature type="active site" description="O-(5'-phospho-DNA)-tyrosine intermediate" evidence="1">
    <location>
        <position position="327"/>
    </location>
</feature>
<feature type="active site" description="O-(5'-phospho-DNA)-tyrosine intermediate" evidence="1">
    <location>
        <position position="331"/>
    </location>
</feature>
<organismHost>
    <name type="scientific">Escherichia coli</name>
    <dbReference type="NCBI Taxonomy" id="562"/>
</organismHost>
<organism>
    <name type="scientific">Escherichia phage alpha3</name>
    <name type="common">Bacteriophage alpha-3</name>
    <dbReference type="NCBI Taxonomy" id="10849"/>
    <lineage>
        <taxon>Viruses</taxon>
        <taxon>Monodnaviria</taxon>
        <taxon>Sangervirae</taxon>
        <taxon>Phixviricota</taxon>
        <taxon>Malgrandaviricetes</taxon>
        <taxon>Petitvirales</taxon>
        <taxon>Microviridae</taxon>
        <taxon>Bullavirinae</taxon>
        <taxon>Alphatrevirus</taxon>
        <taxon>Alphatrevirus alpha3</taxon>
    </lineage>
</organism>
<name>VGA_BPAL3</name>
<dbReference type="EMBL" id="X60322">
    <property type="protein sequence ID" value="CAA42874.1"/>
    <property type="molecule type" value="Genomic_DNA"/>
</dbReference>
<dbReference type="EMBL" id="X12611">
    <property type="protein sequence ID" value="CAA31130.1"/>
    <property type="molecule type" value="Genomic_DNA"/>
</dbReference>
<dbReference type="PIR" id="S22324">
    <property type="entry name" value="S22324"/>
</dbReference>
<dbReference type="RefSeq" id="NP_039590.1">
    <property type="nucleotide sequence ID" value="NC_001330.1"/>
</dbReference>
<dbReference type="GeneID" id="1260690"/>
<dbReference type="KEGG" id="vg:1260690"/>
<dbReference type="OrthoDB" id="1692at10239"/>
<dbReference type="Proteomes" id="UP000002137">
    <property type="component" value="Genome"/>
</dbReference>
<dbReference type="GO" id="GO:0003677">
    <property type="term" value="F:DNA binding"/>
    <property type="evidence" value="ECO:0007669"/>
    <property type="project" value="UniProtKB-KW"/>
</dbReference>
<dbReference type="GO" id="GO:0004519">
    <property type="term" value="F:endonuclease activity"/>
    <property type="evidence" value="ECO:0007669"/>
    <property type="project" value="UniProtKB-KW"/>
</dbReference>
<dbReference type="GO" id="GO:0008270">
    <property type="term" value="F:zinc ion binding"/>
    <property type="evidence" value="ECO:0007669"/>
    <property type="project" value="UniProtKB-KW"/>
</dbReference>
<dbReference type="GO" id="GO:0006260">
    <property type="term" value="P:DNA replication"/>
    <property type="evidence" value="ECO:0007669"/>
    <property type="project" value="UniProtKB-KW"/>
</dbReference>
<dbReference type="GO" id="GO:0039693">
    <property type="term" value="P:viral DNA genome replication"/>
    <property type="evidence" value="ECO:0007669"/>
    <property type="project" value="UniProtKB-KW"/>
</dbReference>
<dbReference type="InterPro" id="IPR008766">
    <property type="entry name" value="Replication_gene_A-like"/>
</dbReference>
<dbReference type="Pfam" id="PF05840">
    <property type="entry name" value="Phage_GPA"/>
    <property type="match status" value="1"/>
</dbReference>
<gene>
    <name type="primary">A</name>
</gene>